<protein>
    <recommendedName>
        <fullName>Superoxide dismutase [Mn/Fe]</fullName>
        <ecNumber evidence="2">1.15.1.1</ecNumber>
    </recommendedName>
</protein>
<accession>Q49XZ6</accession>
<gene>
    <name type="primary">sodA</name>
    <name type="ordered locus">SSP1203</name>
</gene>
<name>SODM_STAS1</name>
<dbReference type="EC" id="1.15.1.1" evidence="2"/>
<dbReference type="EMBL" id="AP008934">
    <property type="protein sequence ID" value="BAE18348.1"/>
    <property type="molecule type" value="Genomic_DNA"/>
</dbReference>
<dbReference type="RefSeq" id="WP_011303014.1">
    <property type="nucleotide sequence ID" value="NZ_MTGA01000038.1"/>
</dbReference>
<dbReference type="SMR" id="Q49XZ6"/>
<dbReference type="KEGG" id="ssp:SSP1203"/>
<dbReference type="eggNOG" id="COG0605">
    <property type="taxonomic scope" value="Bacteria"/>
</dbReference>
<dbReference type="HOGENOM" id="CLU_031625_0_1_9"/>
<dbReference type="OrthoDB" id="9803125at2"/>
<dbReference type="Proteomes" id="UP000006371">
    <property type="component" value="Chromosome"/>
</dbReference>
<dbReference type="GO" id="GO:0005737">
    <property type="term" value="C:cytoplasm"/>
    <property type="evidence" value="ECO:0007669"/>
    <property type="project" value="TreeGrafter"/>
</dbReference>
<dbReference type="GO" id="GO:0046872">
    <property type="term" value="F:metal ion binding"/>
    <property type="evidence" value="ECO:0007669"/>
    <property type="project" value="UniProtKB-KW"/>
</dbReference>
<dbReference type="GO" id="GO:0004784">
    <property type="term" value="F:superoxide dismutase activity"/>
    <property type="evidence" value="ECO:0007669"/>
    <property type="project" value="UniProtKB-EC"/>
</dbReference>
<dbReference type="FunFam" id="1.10.287.990:FF:000001">
    <property type="entry name" value="Superoxide dismutase"/>
    <property type="match status" value="1"/>
</dbReference>
<dbReference type="FunFam" id="3.55.40.20:FF:000001">
    <property type="entry name" value="Superoxide dismutase"/>
    <property type="match status" value="1"/>
</dbReference>
<dbReference type="Gene3D" id="1.10.287.990">
    <property type="entry name" value="Fe,Mn superoxide dismutase (SOD) domain"/>
    <property type="match status" value="1"/>
</dbReference>
<dbReference type="Gene3D" id="3.55.40.20">
    <property type="entry name" value="Iron/manganese superoxide dismutase, C-terminal domain"/>
    <property type="match status" value="1"/>
</dbReference>
<dbReference type="InterPro" id="IPR001189">
    <property type="entry name" value="Mn/Fe_SOD"/>
</dbReference>
<dbReference type="InterPro" id="IPR019833">
    <property type="entry name" value="Mn/Fe_SOD_BS"/>
</dbReference>
<dbReference type="InterPro" id="IPR019832">
    <property type="entry name" value="Mn/Fe_SOD_C"/>
</dbReference>
<dbReference type="InterPro" id="IPR019831">
    <property type="entry name" value="Mn/Fe_SOD_N"/>
</dbReference>
<dbReference type="InterPro" id="IPR036324">
    <property type="entry name" value="Mn/Fe_SOD_N_sf"/>
</dbReference>
<dbReference type="InterPro" id="IPR036314">
    <property type="entry name" value="SOD_C_sf"/>
</dbReference>
<dbReference type="PANTHER" id="PTHR43595">
    <property type="entry name" value="37S RIBOSOMAL PROTEIN S26, MITOCHONDRIAL"/>
    <property type="match status" value="1"/>
</dbReference>
<dbReference type="PANTHER" id="PTHR43595:SF2">
    <property type="entry name" value="SMALL RIBOSOMAL SUBUNIT PROTEIN MS42"/>
    <property type="match status" value="1"/>
</dbReference>
<dbReference type="Pfam" id="PF02777">
    <property type="entry name" value="Sod_Fe_C"/>
    <property type="match status" value="1"/>
</dbReference>
<dbReference type="Pfam" id="PF00081">
    <property type="entry name" value="Sod_Fe_N"/>
    <property type="match status" value="1"/>
</dbReference>
<dbReference type="PIRSF" id="PIRSF000349">
    <property type="entry name" value="SODismutase"/>
    <property type="match status" value="1"/>
</dbReference>
<dbReference type="PRINTS" id="PR01703">
    <property type="entry name" value="MNSODISMTASE"/>
</dbReference>
<dbReference type="SUPFAM" id="SSF54719">
    <property type="entry name" value="Fe,Mn superoxide dismutase (SOD), C-terminal domain"/>
    <property type="match status" value="1"/>
</dbReference>
<dbReference type="SUPFAM" id="SSF46609">
    <property type="entry name" value="Fe,Mn superoxide dismutase (SOD), N-terminal domain"/>
    <property type="match status" value="1"/>
</dbReference>
<dbReference type="PROSITE" id="PS00088">
    <property type="entry name" value="SOD_MN"/>
    <property type="match status" value="1"/>
</dbReference>
<proteinExistence type="inferred from homology"/>
<reference key="1">
    <citation type="journal article" date="2005" name="Proc. Natl. Acad. Sci. U.S.A.">
        <title>Whole genome sequence of Staphylococcus saprophyticus reveals the pathogenesis of uncomplicated urinary tract infection.</title>
        <authorList>
            <person name="Kuroda M."/>
            <person name="Yamashita A."/>
            <person name="Hirakawa H."/>
            <person name="Kumano M."/>
            <person name="Morikawa K."/>
            <person name="Higashide M."/>
            <person name="Maruyama A."/>
            <person name="Inose Y."/>
            <person name="Matoba K."/>
            <person name="Toh H."/>
            <person name="Kuhara S."/>
            <person name="Hattori M."/>
            <person name="Ohta T."/>
        </authorList>
    </citation>
    <scope>NUCLEOTIDE SEQUENCE [LARGE SCALE GENOMIC DNA]</scope>
    <source>
        <strain>ATCC 15305 / DSM 20229 / NCIMB 8711 / NCTC 7292 / S-41</strain>
    </source>
</reference>
<comment type="function">
    <text evidence="2">Destroys superoxide anion radicals which are normally produced within the cells and which are toxic to biological systems. Catalyzes the dismutation of superoxide anion radicals into O2 and H2O2 by successive reduction and oxidation of the transition metal ion at the active site.</text>
</comment>
<comment type="catalytic activity">
    <reaction evidence="2">
        <text>2 superoxide + 2 H(+) = H2O2 + O2</text>
        <dbReference type="Rhea" id="RHEA:20696"/>
        <dbReference type="ChEBI" id="CHEBI:15378"/>
        <dbReference type="ChEBI" id="CHEBI:15379"/>
        <dbReference type="ChEBI" id="CHEBI:16240"/>
        <dbReference type="ChEBI" id="CHEBI:18421"/>
        <dbReference type="EC" id="1.15.1.1"/>
    </reaction>
    <physiologicalReaction direction="left-to-right" evidence="2">
        <dbReference type="Rhea" id="RHEA:20697"/>
    </physiologicalReaction>
</comment>
<comment type="cofactor">
    <cofactor evidence="2">
        <name>Mn(2+)</name>
        <dbReference type="ChEBI" id="CHEBI:29035"/>
    </cofactor>
    <cofactor evidence="2">
        <name>Fe(3+)</name>
        <dbReference type="ChEBI" id="CHEBI:29034"/>
    </cofactor>
    <text evidence="2">Binds 1 Mn(2+) or Fe(3+) ion per subunit.</text>
</comment>
<comment type="subunit">
    <text evidence="1">Homodimer.</text>
</comment>
<comment type="similarity">
    <text evidence="3">Belongs to the iron/manganese superoxide dismutase family.</text>
</comment>
<keyword id="KW-0408">Iron</keyword>
<keyword id="KW-0464">Manganese</keyword>
<keyword id="KW-0479">Metal-binding</keyword>
<keyword id="KW-0560">Oxidoreductase</keyword>
<keyword id="KW-1185">Reference proteome</keyword>
<keyword id="KW-0346">Stress response</keyword>
<evidence type="ECO:0000250" key="1"/>
<evidence type="ECO:0000250" key="2">
    <source>
        <dbReference type="UniProtKB" id="P80293"/>
    </source>
</evidence>
<evidence type="ECO:0000305" key="3"/>
<organism>
    <name type="scientific">Staphylococcus saprophyticus subsp. saprophyticus (strain ATCC 15305 / DSM 20229 / NCIMB 8711 / NCTC 7292 / S-41)</name>
    <dbReference type="NCBI Taxonomy" id="342451"/>
    <lineage>
        <taxon>Bacteria</taxon>
        <taxon>Bacillati</taxon>
        <taxon>Bacillota</taxon>
        <taxon>Bacilli</taxon>
        <taxon>Bacillales</taxon>
        <taxon>Staphylococcaceae</taxon>
        <taxon>Staphylococcus</taxon>
    </lineage>
</organism>
<sequence>MAFELPNLPYGFDALEPHIDKQTMEIHHDKHHNTYVTKLNAAVEGTDLESKSIEEIVANLDSVPENIQTAVRNNGGGHLNHSLFWELLTPNSEEKGTVVDKIKEQWGSLDAFKEEFADKAAARFGSGWAWLVVNNGNLEIVTTPNQDNPLTEGKTPILGLDVWEHAYYLKYQNKRPDYISAFWNVVNWEKVDELYNAAK</sequence>
<feature type="chain" id="PRO_0000293967" description="Superoxide dismutase [Mn/Fe]">
    <location>
        <begin position="1"/>
        <end position="199"/>
    </location>
</feature>
<feature type="binding site" evidence="2">
    <location>
        <position position="27"/>
    </location>
    <ligand>
        <name>Fe(3+)</name>
        <dbReference type="ChEBI" id="CHEBI:29034"/>
    </ligand>
</feature>
<feature type="binding site" evidence="2">
    <location>
        <position position="27"/>
    </location>
    <ligand>
        <name>Mn(2+)</name>
        <dbReference type="ChEBI" id="CHEBI:29035"/>
    </ligand>
</feature>
<feature type="binding site" evidence="2">
    <location>
        <position position="81"/>
    </location>
    <ligand>
        <name>Fe(3+)</name>
        <dbReference type="ChEBI" id="CHEBI:29034"/>
    </ligand>
</feature>
<feature type="binding site" evidence="2">
    <location>
        <position position="81"/>
    </location>
    <ligand>
        <name>Mn(2+)</name>
        <dbReference type="ChEBI" id="CHEBI:29035"/>
    </ligand>
</feature>
<feature type="binding site" evidence="2">
    <location>
        <position position="161"/>
    </location>
    <ligand>
        <name>Fe(3+)</name>
        <dbReference type="ChEBI" id="CHEBI:29034"/>
    </ligand>
</feature>
<feature type="binding site" evidence="2">
    <location>
        <position position="161"/>
    </location>
    <ligand>
        <name>Mn(2+)</name>
        <dbReference type="ChEBI" id="CHEBI:29035"/>
    </ligand>
</feature>
<feature type="binding site" evidence="2">
    <location>
        <position position="165"/>
    </location>
    <ligand>
        <name>Fe(3+)</name>
        <dbReference type="ChEBI" id="CHEBI:29034"/>
    </ligand>
</feature>
<feature type="binding site" evidence="2">
    <location>
        <position position="165"/>
    </location>
    <ligand>
        <name>Mn(2+)</name>
        <dbReference type="ChEBI" id="CHEBI:29035"/>
    </ligand>
</feature>